<keyword id="KW-0058">Aromatic hydrocarbons catabolism</keyword>
<keyword id="KW-0520">NAD</keyword>
<keyword id="KW-0560">Oxidoreductase</keyword>
<keyword id="KW-0614">Plasmid</keyword>
<organism>
    <name type="scientific">Pseudomonas sp. (strain C18)</name>
    <dbReference type="NCBI Taxonomy" id="69011"/>
    <lineage>
        <taxon>Bacteria</taxon>
        <taxon>Pseudomonadati</taxon>
        <taxon>Pseudomonadota</taxon>
    </lineage>
</organism>
<feature type="chain" id="PRO_0000056590" description="Salicylaldehyde dehydrogenase">
    <location>
        <begin position="1"/>
        <end position="483"/>
    </location>
</feature>
<feature type="active site" evidence="2">
    <location>
        <position position="250"/>
    </location>
</feature>
<feature type="active site" evidence="2">
    <location>
        <position position="284"/>
    </location>
</feature>
<feature type="binding site" evidence="1">
    <location>
        <begin position="228"/>
        <end position="233"/>
    </location>
    <ligand>
        <name>NAD(+)</name>
        <dbReference type="ChEBI" id="CHEBI:57540"/>
    </ligand>
</feature>
<gene>
    <name type="primary">doxF</name>
</gene>
<name>NAHF_PSEU8</name>
<comment type="catalytic activity">
    <reaction>
        <text>salicylaldehyde + NAD(+) + H2O = salicylate + NADH + 2 H(+)</text>
        <dbReference type="Rhea" id="RHEA:18537"/>
        <dbReference type="ChEBI" id="CHEBI:15377"/>
        <dbReference type="ChEBI" id="CHEBI:15378"/>
        <dbReference type="ChEBI" id="CHEBI:16008"/>
        <dbReference type="ChEBI" id="CHEBI:30762"/>
        <dbReference type="ChEBI" id="CHEBI:57540"/>
        <dbReference type="ChEBI" id="CHEBI:57945"/>
        <dbReference type="EC" id="1.2.1.65"/>
    </reaction>
</comment>
<comment type="pathway">
    <text>Aromatic compound metabolism; naphthalene degradation.</text>
</comment>
<comment type="miscellaneous">
    <text evidence="4">Encoded on an unnamed 75 kb plasmid.</text>
</comment>
<comment type="similarity">
    <text evidence="3">Belongs to the aldehyde dehydrogenase family.</text>
</comment>
<evidence type="ECO:0000250" key="1"/>
<evidence type="ECO:0000255" key="2">
    <source>
        <dbReference type="PROSITE-ProRule" id="PRU10007"/>
    </source>
</evidence>
<evidence type="ECO:0000305" key="3"/>
<evidence type="ECO:0000305" key="4">
    <source>
    </source>
</evidence>
<reference key="1">
    <citation type="journal article" date="1993" name="J. Bacteriol.">
        <title>Metabolism of dibenzothiophene and naphthalene in Pseudomonas strains: complete DNA sequence of an upper naphthalene catabolic pathway.</title>
        <authorList>
            <person name="Denome S.A."/>
            <person name="Stanley D.C."/>
            <person name="Olson E.S."/>
            <person name="Young K.D."/>
        </authorList>
    </citation>
    <scope>NUCLEOTIDE SEQUENCE [GENOMIC DNA]</scope>
    <source>
        <strain>C18</strain>
        <plasmid>unnamed</plasmid>
    </source>
</reference>
<proteinExistence type="inferred from homology"/>
<sequence>MKTKLFINNAWIDSSDQQTFERIHPVSSDVVTESANATVTDAIKAAQAAEEAFKTWKAVGPSERRRLLLKVADVMESKTPKFIEVMAMEVGASALWAGFNVHASANVFREAASLATQIQGETIPTDKAETLSMTLRQPVGPILSIVPWNGTAVLAARAIAYPLVCGNTVVFKGSEFSPATHALITQCVQEAGLPAGVLNYLNSSPDRSPEIADALISAKEIRRINFTGSTRVGSIIAQKAAQHLKRCLLELGGKSPLIVLDDADIDAAVKAAVFGSFLFQGQICMSTERLIVDEKIADEFVAKFVEKTKRLSAGDPCVTGDCIIGPMVSPNSGERINGLFKDAIDKGAKVVCGGLAQGALMPATILDHVKSDMRIYDEETFGPITVVIRCKGEAEAVRIANDSVYGLSSGVFGRDINRALRVGMSIEYGSVHINGSTVQNEAQAPYGGTKNTGYGRFDGRAVIDEFTEIKWLTIEPFEQQYPF</sequence>
<protein>
    <recommendedName>
        <fullName>Salicylaldehyde dehydrogenase</fullName>
        <ecNumber>1.2.1.65</ecNumber>
    </recommendedName>
</protein>
<dbReference type="EC" id="1.2.1.65"/>
<dbReference type="EMBL" id="M60405">
    <property type="protein sequence ID" value="AAA16129.1"/>
    <property type="molecule type" value="Genomic_DNA"/>
</dbReference>
<dbReference type="SMR" id="P0A390"/>
<dbReference type="UniPathway" id="UPA00082"/>
<dbReference type="GO" id="GO:0018485">
    <property type="term" value="F:salicylaldehyde dehydrogenase (NAD+) activity"/>
    <property type="evidence" value="ECO:0007669"/>
    <property type="project" value="UniProtKB-EC"/>
</dbReference>
<dbReference type="GO" id="GO:0009056">
    <property type="term" value="P:catabolic process"/>
    <property type="evidence" value="ECO:0007669"/>
    <property type="project" value="UniProtKB-KW"/>
</dbReference>
<dbReference type="CDD" id="cd07105">
    <property type="entry name" value="ALDH_SaliADH"/>
    <property type="match status" value="1"/>
</dbReference>
<dbReference type="FunFam" id="3.40.309.10:FF:000010">
    <property type="entry name" value="Gamma-aminobutyraldehyde dehydrogenase"/>
    <property type="match status" value="1"/>
</dbReference>
<dbReference type="FunFam" id="3.40.605.10:FF:000007">
    <property type="entry name" value="NAD/NADP-dependent betaine aldehyde dehydrogenase"/>
    <property type="match status" value="1"/>
</dbReference>
<dbReference type="Gene3D" id="3.40.605.10">
    <property type="entry name" value="Aldehyde Dehydrogenase, Chain A, domain 1"/>
    <property type="match status" value="1"/>
</dbReference>
<dbReference type="Gene3D" id="3.40.309.10">
    <property type="entry name" value="Aldehyde Dehydrogenase, Chain A, domain 2"/>
    <property type="match status" value="1"/>
</dbReference>
<dbReference type="InterPro" id="IPR016161">
    <property type="entry name" value="Ald_DH/histidinol_DH"/>
</dbReference>
<dbReference type="InterPro" id="IPR016163">
    <property type="entry name" value="Ald_DH_C"/>
</dbReference>
<dbReference type="InterPro" id="IPR029510">
    <property type="entry name" value="Ald_DH_CS_GLU"/>
</dbReference>
<dbReference type="InterPro" id="IPR016162">
    <property type="entry name" value="Ald_DH_N"/>
</dbReference>
<dbReference type="InterPro" id="IPR015590">
    <property type="entry name" value="Aldehyde_DH_dom"/>
</dbReference>
<dbReference type="PANTHER" id="PTHR42986">
    <property type="entry name" value="BENZALDEHYDE DEHYDROGENASE YFMT"/>
    <property type="match status" value="1"/>
</dbReference>
<dbReference type="PANTHER" id="PTHR42986:SF1">
    <property type="entry name" value="BENZALDEHYDE DEHYDROGENASE YFMT"/>
    <property type="match status" value="1"/>
</dbReference>
<dbReference type="Pfam" id="PF00171">
    <property type="entry name" value="Aldedh"/>
    <property type="match status" value="1"/>
</dbReference>
<dbReference type="SUPFAM" id="SSF53720">
    <property type="entry name" value="ALDH-like"/>
    <property type="match status" value="1"/>
</dbReference>
<dbReference type="PROSITE" id="PS00687">
    <property type="entry name" value="ALDEHYDE_DEHYDR_GLU"/>
    <property type="match status" value="1"/>
</dbReference>
<accession>P0A390</accession>
<accession>O34269</accession>
<accession>Q52460</accession>
<geneLocation type="plasmid">
    <name>unnamed</name>
</geneLocation>